<protein>
    <recommendedName>
        <fullName>Non-structural protein of 4.9 kDa</fullName>
        <shortName>ns4.9</shortName>
    </recommendedName>
    <alternativeName>
        <fullName>4.9 kDa accessory protein</fullName>
    </alternativeName>
</protein>
<reference key="1">
    <citation type="journal article" date="1998" name="Virus Genes">
        <title>Nucleotide and predicted amino acid sequences of all genes encoded by the 3' genomic portion (9.5 kb) of respiratory bovine coronaviruses and comparisons among respiratory and enteric coronaviruses.</title>
        <authorList>
            <person name="Chouljenko V.N."/>
            <person name="Kousoulas K.G."/>
            <person name="Lin X.Q."/>
            <person name="Storz J."/>
        </authorList>
    </citation>
    <scope>NUCLEOTIDE SEQUENCE [GENOMIC RNA]</scope>
    <source>
        <strain>Isolate OK-0514-3</strain>
    </source>
</reference>
<organismHost>
    <name type="scientific">Bos taurus</name>
    <name type="common">Bovine</name>
    <dbReference type="NCBI Taxonomy" id="9913"/>
</organismHost>
<organism>
    <name type="scientific">Bovine coronavirus (strain OK-0514)</name>
    <name type="common">BCoV</name>
    <name type="synonym">BCV</name>
    <dbReference type="NCBI Taxonomy" id="231432"/>
    <lineage>
        <taxon>Viruses</taxon>
        <taxon>Riboviria</taxon>
        <taxon>Orthornavirae</taxon>
        <taxon>Pisuviricota</taxon>
        <taxon>Pisoniviricetes</taxon>
        <taxon>Nidovirales</taxon>
        <taxon>Cornidovirineae</taxon>
        <taxon>Coronaviridae</taxon>
        <taxon>Orthocoronavirinae</taxon>
        <taxon>Betacoronavirus</taxon>
        <taxon>Embecovirus</taxon>
        <taxon>Betacoronavirus 1</taxon>
    </lineage>
</organism>
<proteinExistence type="inferred from homology"/>
<sequence>MTTKFVFDLLAPDDILHPSNHVNLIIRLIEVEHIIIATTMPAV</sequence>
<comment type="similarity">
    <text evidence="1">Belongs to the coronaviruses ns4.9 protein family.</text>
</comment>
<dbReference type="EMBL" id="AF058944">
    <property type="protein sequence ID" value="AAF25520.1"/>
    <property type="molecule type" value="Genomic_RNA"/>
</dbReference>
<dbReference type="InterPro" id="IPR009314">
    <property type="entry name" value="Corona_NS1"/>
</dbReference>
<dbReference type="Pfam" id="PF06145">
    <property type="entry name" value="Corona_NS1"/>
    <property type="match status" value="1"/>
</dbReference>
<evidence type="ECO:0000305" key="1"/>
<name>NS49_CVBOK</name>
<feature type="chain" id="PRO_0000283943" description="Non-structural protein of 4.9 kDa">
    <location>
        <begin position="1"/>
        <end position="43"/>
    </location>
</feature>
<accession>Q9QAQ7</accession>
<gene>
    <name type="ORF">4a</name>
</gene>